<comment type="function">
    <text evidence="2 4 5 6 7 8 9 10 11 13 14 15 16">Component of LSm protein complexes, which are involved in RNA processing and may function in a chaperone-like manner (PubMed:10747033, PubMed:24513854). Component of the cytoplasmic LSM1-LSM7 complex which is involved in mRNA degradation by activating the decapping step (PubMed:10747033, PubMed:10761922, PubMed:17513695, PubMed:24513854). Together with PAT1, the LSM1-LSM7 complex binds to osmotic stress-activated mRNAs to attenuate the osmotic stress response, probably by limiting ribosome access to the mRNA and consequently translation (PubMed:30059503). Component of the nuclear LSM2-LSM8 complex, which is involved in spliceosome assembly (PubMed:10747033). The LSM2-LSM8 complex plays a role in the biogenesis of the spliceosomal U4/U6-U5 tri-snRNP complex by accelerating PRP24-mediated annealing of U4/U6 di-snRNA (PubMed:10747033, PubMed:24240276, PubMed:29717126). The LSM2-LSM8 complex binds U6 snRNA terminating with a non-cyclic 3' phosphate group (PubMed:29717126). LSM2-LSM8 is probably also involved in degradation of nuclear pre-mRNA by targeting them for decapping (PubMed:15485930). LSM2-LSM8 could be involved in processing of pre-tRNAs, pre-rRNAs and U3 snoRNA, although involvement may be indirect (PubMed:12077351, PubMed:12438310, PubMed:15075370). In a complex that probably contains LSM2-LSM7, but not LSM1 or LSM8, associates with the precursor of the RNA component of RNase P (pre-P RNA) and may be involved in maturing pre-P RNA; the complex also associates with snoRNA SNR5 (PubMed:10369684, PubMed:15075370).</text>
</comment>
<comment type="subunit">
    <text evidence="2 3 4 9 12 13 14 15">Component of the heptameric LSM1-LSM7 complex that forms a seven-membered ring structure with a donut shape (PubMed:10747033, PubMed:24139796, PubMed:24513854). The LSm subunits are arranged in the order LSM1, LSM2, LSM3, LSM6, LSM5, LSM7 and LSM4 (PubMed:24139796). Except for LSM1, where a C-terminal helix crosses the ring structure to form additional interactions with LSM3 and LSM6, each subunit interacts only with its two neighboring subunits (PubMed:24139796). The LSM1-LSM7 complex interacts with PAT1; within the complex PAT1 has direct interactions with LSM2 and LSM3 (PubMed:10747033, PubMed:10761922, PubMed:24139796). The LSM1-LSM7 complex interacts with XRN1 (PubMed:10747033). Component of the heptameric LSM2-LSM8 complex that forms a seven-membered ring structure with a donut shape; an RNA strand can pass through the hole in the center of the ring structure (PubMed:10369684, PubMed:10747033, PubMed:24240276, PubMed:29717126). The LSm subunits are arranged in the order LSM8, LSM2, LSM3, LSM6, LSM5, LSM7 and LSM4 (PubMed:24240276). Component of the spliceosome U4/U6-U5 tri-snRNP complex composed of the U4, U6 and U5 snRNAs and at least PRP3, PRP4, PRP6, PRP8, PRP18, PRP31, PRP38, SNU13, SNU23, SNU66, SNU114, SPP381, SMB1, SMD1, SMD2, SMD3, SMX2, SMX3, LSM2, LSM3, LSM4, LSM5, LSM6, LSM7, LSM8, BRR2 and DIB1 (PubMed:10449419, PubMed:24240276). May be found in a complex comprising LSM2-LSM7 without LSM1 or LSM8; the complex associates with pre-P RNA and snoRNA SNR5 (PubMed:10369684, PubMed:15075370).</text>
</comment>
<comment type="interaction">
    <interactant intactId="EBI-196">
        <id>Q06406</id>
    </interactant>
    <interactant intactId="EBI-174">
        <id>P47017</id>
        <label>LSM1</label>
    </interactant>
    <organismsDiffer>false</organismsDiffer>
    <experiments>4</experiments>
</comment>
<comment type="interaction">
    <interactant intactId="EBI-196">
        <id>Q06406</id>
    </interactant>
    <interactant intactId="EBI-180">
        <id>P38203</id>
        <label>LSM2</label>
    </interactant>
    <organismsDiffer>false</organismsDiffer>
    <experiments>8</experiments>
</comment>
<comment type="interaction">
    <interactant intactId="EBI-196">
        <id>Q06406</id>
    </interactant>
    <interactant intactId="EBI-10227">
        <id>P57743</id>
        <label>LSM3</label>
    </interactant>
    <organismsDiffer>false</organismsDiffer>
    <experiments>3</experiments>
</comment>
<comment type="interaction">
    <interactant intactId="EBI-196">
        <id>Q06406</id>
    </interactant>
    <interactant intactId="EBI-188">
        <id>P40070</id>
        <label>LSM4</label>
    </interactant>
    <organismsDiffer>false</organismsDiffer>
    <experiments>6</experiments>
</comment>
<comment type="interaction">
    <interactant intactId="EBI-196">
        <id>Q06406</id>
    </interactant>
    <interactant intactId="EBI-10236">
        <id>P40089</id>
        <label>LSM5</label>
    </interactant>
    <organismsDiffer>false</organismsDiffer>
    <experiments>5</experiments>
</comment>
<comment type="interaction">
    <interactant intactId="EBI-196">
        <id>Q06406</id>
    </interactant>
    <interactant intactId="EBI-313">
        <id>P47093</id>
        <label>LSM8</label>
    </interactant>
    <organismsDiffer>false</organismsDiffer>
    <experiments>5</experiments>
</comment>
<comment type="interaction">
    <interactant intactId="EBI-196">
        <id>Q06406</id>
    </interactant>
    <interactant intactId="EBI-204">
        <id>P25644</id>
        <label>PAT1</label>
    </interactant>
    <organismsDiffer>false</organismsDiffer>
    <experiments>3</experiments>
</comment>
<comment type="subcellular location">
    <subcellularLocation>
        <location evidence="18">Cytoplasm</location>
    </subcellularLocation>
    <subcellularLocation>
        <location evidence="18">Nucleus</location>
        <location evidence="18">Nucleolus</location>
    </subcellularLocation>
    <text>LSM1 and LSM8 act competitively with respect to the localization of LSM1-LSM7 to the cytoplasm and LSM2-LSM8 to the nucleus. LSm proteins shift to the cytoplasm under conditions of stress.</text>
</comment>
<comment type="similarity">
    <text evidence="17">Belongs to the snRNP Sm proteins family. SmF/LSm6 subfamily.</text>
</comment>
<comment type="sequence caution" evidence="17">
    <conflict type="erroneous initiation">
        <sequence resource="EMBL-CDS" id="AAB64814"/>
    </conflict>
</comment>
<keyword id="KW-0002">3D-structure</keyword>
<keyword id="KW-0963">Cytoplasm</keyword>
<keyword id="KW-0507">mRNA processing</keyword>
<keyword id="KW-0508">mRNA splicing</keyword>
<keyword id="KW-0539">Nucleus</keyword>
<keyword id="KW-1185">Reference proteome</keyword>
<keyword id="KW-0687">Ribonucleoprotein</keyword>
<keyword id="KW-0694">RNA-binding</keyword>
<keyword id="KW-0698">rRNA processing</keyword>
<keyword id="KW-0747">Spliceosome</keyword>
<keyword id="KW-0819">tRNA processing</keyword>
<dbReference type="EMBL" id="U28373">
    <property type="protein sequence ID" value="AAB64814.1"/>
    <property type="status" value="ALT_INIT"/>
    <property type="molecule type" value="Genomic_DNA"/>
</dbReference>
<dbReference type="EMBL" id="BK006938">
    <property type="protein sequence ID" value="DAA12220.1"/>
    <property type="molecule type" value="Genomic_DNA"/>
</dbReference>
<dbReference type="PIR" id="S61173">
    <property type="entry name" value="S61173"/>
</dbReference>
<dbReference type="RefSeq" id="NP_010666.2">
    <property type="nucleotide sequence ID" value="NM_001180686.1"/>
</dbReference>
<dbReference type="PDB" id="3JCM">
    <property type="method" value="EM"/>
    <property type="resolution" value="3.80 A"/>
    <property type="chains" value="e=1-86"/>
</dbReference>
<dbReference type="PDB" id="4C8Q">
    <property type="method" value="X-ray"/>
    <property type="resolution" value="3.70 A"/>
    <property type="chains" value="F=1-86"/>
</dbReference>
<dbReference type="PDB" id="4C92">
    <property type="method" value="X-ray"/>
    <property type="resolution" value="2.30 A"/>
    <property type="chains" value="F=1-86"/>
</dbReference>
<dbReference type="PDB" id="4M75">
    <property type="method" value="X-ray"/>
    <property type="resolution" value="2.95 A"/>
    <property type="chains" value="D/K=1-86"/>
</dbReference>
<dbReference type="PDB" id="4M77">
    <property type="method" value="X-ray"/>
    <property type="resolution" value="3.11 A"/>
    <property type="chains" value="D/K=1-86"/>
</dbReference>
<dbReference type="PDB" id="4M78">
    <property type="method" value="X-ray"/>
    <property type="resolution" value="2.79 A"/>
    <property type="chains" value="D/K=1-86"/>
</dbReference>
<dbReference type="PDB" id="4M7A">
    <property type="method" value="X-ray"/>
    <property type="resolution" value="2.78 A"/>
    <property type="chains" value="D/K=1-86"/>
</dbReference>
<dbReference type="PDB" id="4M7D">
    <property type="method" value="X-ray"/>
    <property type="resolution" value="2.60 A"/>
    <property type="chains" value="D/K=1-86"/>
</dbReference>
<dbReference type="PDB" id="5GAN">
    <property type="method" value="EM"/>
    <property type="resolution" value="3.60 A"/>
    <property type="chains" value="6=1-86"/>
</dbReference>
<dbReference type="PDB" id="5NRL">
    <property type="method" value="EM"/>
    <property type="resolution" value="7.20 A"/>
    <property type="chains" value="z=1-86"/>
</dbReference>
<dbReference type="PDB" id="5VSU">
    <property type="method" value="X-ray"/>
    <property type="resolution" value="3.10 A"/>
    <property type="chains" value="F=1-86"/>
</dbReference>
<dbReference type="PDB" id="5ZWM">
    <property type="method" value="EM"/>
    <property type="resolution" value="3.40 A"/>
    <property type="chains" value="x=1-86"/>
</dbReference>
<dbReference type="PDB" id="5ZWO">
    <property type="method" value="EM"/>
    <property type="resolution" value="3.90 A"/>
    <property type="chains" value="x=1-86"/>
</dbReference>
<dbReference type="PDB" id="6ASO">
    <property type="method" value="X-ray"/>
    <property type="resolution" value="2.71 A"/>
    <property type="chains" value="F=1-86"/>
</dbReference>
<dbReference type="PDBsum" id="3JCM"/>
<dbReference type="PDBsum" id="4C8Q"/>
<dbReference type="PDBsum" id="4C92"/>
<dbReference type="PDBsum" id="4M75"/>
<dbReference type="PDBsum" id="4M77"/>
<dbReference type="PDBsum" id="4M78"/>
<dbReference type="PDBsum" id="4M7A"/>
<dbReference type="PDBsum" id="4M7D"/>
<dbReference type="PDBsum" id="5GAN"/>
<dbReference type="PDBsum" id="5NRL"/>
<dbReference type="PDBsum" id="5VSU"/>
<dbReference type="PDBsum" id="5ZWM"/>
<dbReference type="PDBsum" id="5ZWO"/>
<dbReference type="PDBsum" id="6ASO"/>
<dbReference type="EMDB" id="EMD-6972"/>
<dbReference type="EMDB" id="EMD-6974"/>
<dbReference type="SMR" id="Q06406"/>
<dbReference type="BioGRID" id="32437">
    <property type="interactions" value="913"/>
</dbReference>
<dbReference type="ComplexPortal" id="CPX-112">
    <property type="entry name" value="LSM1-7-PAT1 complex"/>
</dbReference>
<dbReference type="ComplexPortal" id="CPX-24">
    <property type="entry name" value="U6 small nuclear ribonucleoprotein complex"/>
</dbReference>
<dbReference type="ComplexPortal" id="CPX-25">
    <property type="entry name" value="U4/U6.U5 tri-small nuclear ribonucleoprotein complex"/>
</dbReference>
<dbReference type="ComplexPortal" id="CPX-32">
    <property type="entry name" value="U4/U6 small nuclear ribonucleoprotein complex"/>
</dbReference>
<dbReference type="ComplexPortal" id="CPX-44">
    <property type="entry name" value="LSM2-8 complex"/>
</dbReference>
<dbReference type="ComplexPortal" id="CPX-45">
    <property type="entry name" value="LSM1-7 complex"/>
</dbReference>
<dbReference type="ComplexPortal" id="CPX-46">
    <property type="entry name" value="LSM2-7 complex"/>
</dbReference>
<dbReference type="DIP" id="DIP-1418N"/>
<dbReference type="FunCoup" id="Q06406">
    <property type="interactions" value="1027"/>
</dbReference>
<dbReference type="IntAct" id="Q06406">
    <property type="interactions" value="71"/>
</dbReference>
<dbReference type="MINT" id="Q06406"/>
<dbReference type="STRING" id="4932.YDR378C"/>
<dbReference type="MoonDB" id="Q06406">
    <property type="type" value="Predicted"/>
</dbReference>
<dbReference type="iPTMnet" id="Q06406"/>
<dbReference type="PaxDb" id="4932-YDR378C"/>
<dbReference type="PeptideAtlas" id="Q06406"/>
<dbReference type="EnsemblFungi" id="YDR378C_mRNA">
    <property type="protein sequence ID" value="YDR378C"/>
    <property type="gene ID" value="YDR378C"/>
</dbReference>
<dbReference type="GeneID" id="851984"/>
<dbReference type="KEGG" id="sce:YDR378C"/>
<dbReference type="AGR" id="SGD:S000002786"/>
<dbReference type="SGD" id="S000002786">
    <property type="gene designation" value="LSM6"/>
</dbReference>
<dbReference type="VEuPathDB" id="FungiDB:YDR378C"/>
<dbReference type="eggNOG" id="KOG1783">
    <property type="taxonomic scope" value="Eukaryota"/>
</dbReference>
<dbReference type="GeneTree" id="ENSGT00940000154978"/>
<dbReference type="HOGENOM" id="CLU_076902_7_1_1"/>
<dbReference type="InParanoid" id="Q06406"/>
<dbReference type="OMA" id="MYISEQK"/>
<dbReference type="OrthoDB" id="268799at2759"/>
<dbReference type="BioCyc" id="YEAST:G3O-29927-MONOMER"/>
<dbReference type="Reactome" id="R-SCE-430039">
    <property type="pathway name" value="mRNA decay by 5' to 3' exoribonuclease"/>
</dbReference>
<dbReference type="BioGRID-ORCS" id="851984">
    <property type="hits" value="0 hits in 10 CRISPR screens"/>
</dbReference>
<dbReference type="EvolutionaryTrace" id="Q06406"/>
<dbReference type="PRO" id="PR:Q06406"/>
<dbReference type="Proteomes" id="UP000002311">
    <property type="component" value="Chromosome IV"/>
</dbReference>
<dbReference type="RNAct" id="Q06406">
    <property type="molecule type" value="protein"/>
</dbReference>
<dbReference type="GO" id="GO:1990726">
    <property type="term" value="C:Lsm1-7-Pat1 complex"/>
    <property type="evidence" value="ECO:0000314"/>
    <property type="project" value="SGD"/>
</dbReference>
<dbReference type="GO" id="GO:0005730">
    <property type="term" value="C:nucleolus"/>
    <property type="evidence" value="ECO:0000314"/>
    <property type="project" value="ComplexPortal"/>
</dbReference>
<dbReference type="GO" id="GO:0005634">
    <property type="term" value="C:nucleus"/>
    <property type="evidence" value="ECO:0000314"/>
    <property type="project" value="ComplexPortal"/>
</dbReference>
<dbReference type="GO" id="GO:0000932">
    <property type="term" value="C:P-body"/>
    <property type="evidence" value="ECO:0000314"/>
    <property type="project" value="ComplexPortal"/>
</dbReference>
<dbReference type="GO" id="GO:0005732">
    <property type="term" value="C:sno(s)RNA-containing ribonucleoprotein complex"/>
    <property type="evidence" value="ECO:0000353"/>
    <property type="project" value="SGD"/>
</dbReference>
<dbReference type="GO" id="GO:0005681">
    <property type="term" value="C:spliceosomal complex"/>
    <property type="evidence" value="ECO:0000303"/>
    <property type="project" value="ComplexPortal"/>
</dbReference>
<dbReference type="GO" id="GO:0071001">
    <property type="term" value="C:U4/U6 snRNP"/>
    <property type="evidence" value="ECO:0000303"/>
    <property type="project" value="ComplexPortal"/>
</dbReference>
<dbReference type="GO" id="GO:0046540">
    <property type="term" value="C:U4/U6 x U5 tri-snRNP complex"/>
    <property type="evidence" value="ECO:0000314"/>
    <property type="project" value="SGD"/>
</dbReference>
<dbReference type="GO" id="GO:0005688">
    <property type="term" value="C:U6 snRNP"/>
    <property type="evidence" value="ECO:0000314"/>
    <property type="project" value="ComplexPortal"/>
</dbReference>
<dbReference type="GO" id="GO:0003723">
    <property type="term" value="F:RNA binding"/>
    <property type="evidence" value="ECO:0007669"/>
    <property type="project" value="UniProtKB-KW"/>
</dbReference>
<dbReference type="GO" id="GO:0000290">
    <property type="term" value="P:deadenylation-dependent decapping of nuclear-transcribed mRNA"/>
    <property type="evidence" value="ECO:0000315"/>
    <property type="project" value="ComplexPortal"/>
</dbReference>
<dbReference type="GO" id="GO:0030490">
    <property type="term" value="P:maturation of SSU-rRNA"/>
    <property type="evidence" value="ECO:0000315"/>
    <property type="project" value="SGD"/>
</dbReference>
<dbReference type="GO" id="GO:0000398">
    <property type="term" value="P:mRNA splicing, via spliceosome"/>
    <property type="evidence" value="ECO:0000315"/>
    <property type="project" value="SGD"/>
</dbReference>
<dbReference type="GO" id="GO:0006364">
    <property type="term" value="P:rRNA processing"/>
    <property type="evidence" value="ECO:0000315"/>
    <property type="project" value="ComplexPortal"/>
</dbReference>
<dbReference type="GO" id="GO:0008033">
    <property type="term" value="P:tRNA processing"/>
    <property type="evidence" value="ECO:0000315"/>
    <property type="project" value="ComplexPortal"/>
</dbReference>
<dbReference type="DisProt" id="DP01402"/>
<dbReference type="FunFam" id="2.30.30.100:FF:000037">
    <property type="entry name" value="U6 snRNA-associated Sm-like protein LSm6"/>
    <property type="match status" value="1"/>
</dbReference>
<dbReference type="Gene3D" id="2.30.30.100">
    <property type="match status" value="1"/>
</dbReference>
<dbReference type="InterPro" id="IPR016487">
    <property type="entry name" value="Lsm6/sSmF"/>
</dbReference>
<dbReference type="InterPro" id="IPR010920">
    <property type="entry name" value="LSM_dom_sf"/>
</dbReference>
<dbReference type="InterPro" id="IPR047575">
    <property type="entry name" value="Sm"/>
</dbReference>
<dbReference type="InterPro" id="IPR001163">
    <property type="entry name" value="Sm_dom_euk/arc"/>
</dbReference>
<dbReference type="PANTHER" id="PTHR11021">
    <property type="entry name" value="SMALL NUCLEAR RIBONUCLEOPROTEIN F SNRNP-F"/>
    <property type="match status" value="1"/>
</dbReference>
<dbReference type="PANTHER" id="PTHR11021:SF1">
    <property type="entry name" value="U6 SNRNA-ASSOCIATED SM-LIKE PROTEIN LSM6"/>
    <property type="match status" value="1"/>
</dbReference>
<dbReference type="Pfam" id="PF01423">
    <property type="entry name" value="LSM"/>
    <property type="match status" value="1"/>
</dbReference>
<dbReference type="SMART" id="SM00651">
    <property type="entry name" value="Sm"/>
    <property type="match status" value="1"/>
</dbReference>
<dbReference type="SUPFAM" id="SSF50182">
    <property type="entry name" value="Sm-like ribonucleoproteins"/>
    <property type="match status" value="1"/>
</dbReference>
<dbReference type="PROSITE" id="PS52002">
    <property type="entry name" value="SM"/>
    <property type="match status" value="1"/>
</dbReference>
<accession>Q06406</accession>
<accession>D6VT10</accession>
<reference key="1">
    <citation type="journal article" date="1997" name="Nature">
        <title>The nucleotide sequence of Saccharomyces cerevisiae chromosome IV.</title>
        <authorList>
            <person name="Jacq C."/>
            <person name="Alt-Moerbe J."/>
            <person name="Andre B."/>
            <person name="Arnold W."/>
            <person name="Bahr A."/>
            <person name="Ballesta J.P.G."/>
            <person name="Bargues M."/>
            <person name="Baron L."/>
            <person name="Becker A."/>
            <person name="Biteau N."/>
            <person name="Bloecker H."/>
            <person name="Blugeon C."/>
            <person name="Boskovic J."/>
            <person name="Brandt P."/>
            <person name="Brueckner M."/>
            <person name="Buitrago M.J."/>
            <person name="Coster F."/>
            <person name="Delaveau T."/>
            <person name="del Rey F."/>
            <person name="Dujon B."/>
            <person name="Eide L.G."/>
            <person name="Garcia-Cantalejo J.M."/>
            <person name="Goffeau A."/>
            <person name="Gomez-Peris A."/>
            <person name="Granotier C."/>
            <person name="Hanemann V."/>
            <person name="Hankeln T."/>
            <person name="Hoheisel J.D."/>
            <person name="Jaeger W."/>
            <person name="Jimenez A."/>
            <person name="Jonniaux J.-L."/>
            <person name="Kraemer C."/>
            <person name="Kuester H."/>
            <person name="Laamanen P."/>
            <person name="Legros Y."/>
            <person name="Louis E.J."/>
            <person name="Moeller-Rieker S."/>
            <person name="Monnet A."/>
            <person name="Moro M."/>
            <person name="Mueller-Auer S."/>
            <person name="Nussbaumer B."/>
            <person name="Paricio N."/>
            <person name="Paulin L."/>
            <person name="Perea J."/>
            <person name="Perez-Alonso M."/>
            <person name="Perez-Ortin J.E."/>
            <person name="Pohl T.M."/>
            <person name="Prydz H."/>
            <person name="Purnelle B."/>
            <person name="Rasmussen S.W."/>
            <person name="Remacha M.A."/>
            <person name="Revuelta J.L."/>
            <person name="Rieger M."/>
            <person name="Salom D."/>
            <person name="Saluz H.P."/>
            <person name="Saiz J.E."/>
            <person name="Saren A.-M."/>
            <person name="Schaefer M."/>
            <person name="Scharfe M."/>
            <person name="Schmidt E.R."/>
            <person name="Schneider C."/>
            <person name="Scholler P."/>
            <person name="Schwarz S."/>
            <person name="Soler-Mira A."/>
            <person name="Urrestarazu L.A."/>
            <person name="Verhasselt P."/>
            <person name="Vissers S."/>
            <person name="Voet M."/>
            <person name="Volckaert G."/>
            <person name="Wagner G."/>
            <person name="Wambutt R."/>
            <person name="Wedler E."/>
            <person name="Wedler H."/>
            <person name="Woelfl S."/>
            <person name="Harris D.E."/>
            <person name="Bowman S."/>
            <person name="Brown D."/>
            <person name="Churcher C.M."/>
            <person name="Connor R."/>
            <person name="Dedman K."/>
            <person name="Gentles S."/>
            <person name="Hamlin N."/>
            <person name="Hunt S."/>
            <person name="Jones L."/>
            <person name="McDonald S."/>
            <person name="Murphy L.D."/>
            <person name="Niblett D."/>
            <person name="Odell C."/>
            <person name="Oliver K."/>
            <person name="Rajandream M.A."/>
            <person name="Richards C."/>
            <person name="Shore L."/>
            <person name="Walsh S.V."/>
            <person name="Barrell B.G."/>
            <person name="Dietrich F.S."/>
            <person name="Mulligan J.T."/>
            <person name="Allen E."/>
            <person name="Araujo R."/>
            <person name="Aviles E."/>
            <person name="Berno A."/>
            <person name="Carpenter J."/>
            <person name="Chen E."/>
            <person name="Cherry J.M."/>
            <person name="Chung E."/>
            <person name="Duncan M."/>
            <person name="Hunicke-Smith S."/>
            <person name="Hyman R.W."/>
            <person name="Komp C."/>
            <person name="Lashkari D."/>
            <person name="Lew H."/>
            <person name="Lin D."/>
            <person name="Mosedale D."/>
            <person name="Nakahara K."/>
            <person name="Namath A."/>
            <person name="Oefner P."/>
            <person name="Oh C."/>
            <person name="Petel F.X."/>
            <person name="Roberts D."/>
            <person name="Schramm S."/>
            <person name="Schroeder M."/>
            <person name="Shogren T."/>
            <person name="Shroff N."/>
            <person name="Winant A."/>
            <person name="Yelton M.A."/>
            <person name="Botstein D."/>
            <person name="Davis R.W."/>
            <person name="Johnston M."/>
            <person name="Andrews S."/>
            <person name="Brinkman R."/>
            <person name="Cooper J."/>
            <person name="Ding H."/>
            <person name="Du Z."/>
            <person name="Favello A."/>
            <person name="Fulton L."/>
            <person name="Gattung S."/>
            <person name="Greco T."/>
            <person name="Hallsworth K."/>
            <person name="Hawkins J."/>
            <person name="Hillier L.W."/>
            <person name="Jier M."/>
            <person name="Johnson D."/>
            <person name="Johnston L."/>
            <person name="Kirsten J."/>
            <person name="Kucaba T."/>
            <person name="Langston Y."/>
            <person name="Latreille P."/>
            <person name="Le T."/>
            <person name="Mardis E."/>
            <person name="Menezes S."/>
            <person name="Miller N."/>
            <person name="Nhan M."/>
            <person name="Pauley A."/>
            <person name="Peluso D."/>
            <person name="Rifkin L."/>
            <person name="Riles L."/>
            <person name="Taich A."/>
            <person name="Trevaskis E."/>
            <person name="Vignati D."/>
            <person name="Wilcox L."/>
            <person name="Wohldman P."/>
            <person name="Vaudin M."/>
            <person name="Wilson R."/>
            <person name="Waterston R."/>
            <person name="Albermann K."/>
            <person name="Hani J."/>
            <person name="Heumann K."/>
            <person name="Kleine K."/>
            <person name="Mewes H.-W."/>
            <person name="Zollner A."/>
            <person name="Zaccaria P."/>
        </authorList>
    </citation>
    <scope>NUCLEOTIDE SEQUENCE [LARGE SCALE GENOMIC DNA]</scope>
    <source>
        <strain>ATCC 204508 / S288c</strain>
    </source>
</reference>
<reference key="2">
    <citation type="journal article" date="2014" name="G3 (Bethesda)">
        <title>The reference genome sequence of Saccharomyces cerevisiae: Then and now.</title>
        <authorList>
            <person name="Engel S.R."/>
            <person name="Dietrich F.S."/>
            <person name="Fisk D.G."/>
            <person name="Binkley G."/>
            <person name="Balakrishnan R."/>
            <person name="Costanzo M.C."/>
            <person name="Dwight S.S."/>
            <person name="Hitz B.C."/>
            <person name="Karra K."/>
            <person name="Nash R.S."/>
            <person name="Weng S."/>
            <person name="Wong E.D."/>
            <person name="Lloyd P."/>
            <person name="Skrzypek M.S."/>
            <person name="Miyasato S.R."/>
            <person name="Simison M."/>
            <person name="Cherry J.M."/>
        </authorList>
    </citation>
    <scope>GENOME REANNOTATION</scope>
    <source>
        <strain>ATCC 204508 / S288c</strain>
    </source>
</reference>
<reference key="3">
    <citation type="journal article" date="1999" name="EMBO J.">
        <title>Sm and Sm-like proteins assemble in two related complexes of deep evolutionary origin.</title>
        <authorList>
            <person name="Salgado-Garrido J."/>
            <person name="Bragado-Nilsson E."/>
            <person name="Kandels-Lewis S."/>
            <person name="Seraphin B."/>
        </authorList>
    </citation>
    <scope>FUNCTION</scope>
    <scope>IDENTIFICATION IN THE LSM2-LSM8 COMPLEX</scope>
    <scope>ASSOCIATION WITH PRE-P RNA</scope>
</reference>
<reference key="4">
    <citation type="journal article" date="1999" name="EMBO J.">
        <title>Characterization of Sm-like proteins in yeast and their association with U6 snRNA.</title>
        <authorList>
            <person name="Mayes A.E."/>
            <person name="Verdone L."/>
            <person name="Legrain P."/>
            <person name="Beggs J.D."/>
        </authorList>
    </citation>
    <scope>CHARACTERIZATION</scope>
</reference>
<reference key="5">
    <citation type="journal article" date="1999" name="EMBO J.">
        <title>Identification by mass spectrometry and functional analysis of novel proteins of the yeast [U4/U6.U5] tri-snRNP.</title>
        <authorList>
            <person name="Gottschalk A."/>
            <person name="Neubauer G."/>
            <person name="Banroques J."/>
            <person name="Mann M."/>
            <person name="Luehrmann R."/>
            <person name="Fabrizio P."/>
        </authorList>
    </citation>
    <scope>SUBUNIT</scope>
    <scope>IDENTIFICATION IN THE U4/U5/U6 TRI-SNRNP COMPLEX</scope>
    <scope>IDENTIFICATION BY MASS SPECTROMETRY</scope>
</reference>
<reference key="6">
    <citation type="journal article" date="2000" name="EMBO J.">
        <title>A Sm-like protein complex that participates in mRNA degradation.</title>
        <authorList>
            <person name="Bouveret E."/>
            <person name="Rigaut G."/>
            <person name="Shevchenko A."/>
            <person name="Wilm M."/>
            <person name="Seraphin B."/>
        </authorList>
    </citation>
    <scope>IDENTIFICATION IN THE LSM1-LSM7 COMPLEX</scope>
    <scope>ASSOCIATION OF THE LSM1-LSM7 COMPLEX WITH PAT1 AND XRN1</scope>
    <scope>FUNCTION OF THE LSM1-LSM7 COMPLEX</scope>
    <scope>IDENTIFICATION IN THE LSM2-LSM8 COMPLEX</scope>
    <scope>ASSOCIATION OF THE LSM2-LSM8 COMPLEX WITH U6 SNRNA</scope>
    <scope>IDENTIFICATION BY MASS SPECTROMETRY</scope>
    <scope>IDENTIFICATION OF PROBABLE INTITIATION SITE</scope>
</reference>
<reference key="7">
    <citation type="journal article" date="2000" name="Nature">
        <title>Yeast Sm-like proteins function in mRNA decapping and decay.</title>
        <authorList>
            <person name="Tharun S."/>
            <person name="He W."/>
            <person name="Mayes A.E."/>
            <person name="Lennertz P."/>
            <person name="Beggs J.D."/>
            <person name="Parker R."/>
        </authorList>
    </citation>
    <scope>FUNCTION OF THE LSM1-LSM7 COMPLEX</scope>
</reference>
<reference key="8">
    <citation type="journal article" date="2002" name="Mol. Cell. Biol.">
        <title>Lsm proteins are required for normal processing of pre-tRNAs and their efficient association with La-homologous protein Lhp1p.</title>
        <authorList>
            <person name="Kufel J."/>
            <person name="Allmang C."/>
            <person name="Verdone L."/>
            <person name="Beggs J.D."/>
            <person name="Tollervey D."/>
        </authorList>
    </citation>
    <scope>FUNCTION</scope>
</reference>
<reference key="9">
    <citation type="journal article" date="2003" name="J. Biol. Chem.">
        <title>Lsm Proteins are required for normal processing and stability of ribosomal RNAs.</title>
        <authorList>
            <person name="Kufel J."/>
            <person name="Allmang C."/>
            <person name="Petfalski E."/>
            <person name="Beggs J.D."/>
            <person name="Tollervey D."/>
        </authorList>
    </citation>
    <scope>FUNCTION</scope>
</reference>
<reference key="10">
    <citation type="journal article" date="2003" name="Nucleic Acids Res.">
        <title>A complex pathway for 3' processing of the yeast U3 snoRNA.</title>
        <authorList>
            <person name="Kufel J."/>
            <person name="Allmang C."/>
            <person name="Verdone L."/>
            <person name="Beggs J."/>
            <person name="Tollervey D."/>
        </authorList>
    </citation>
    <scope>FUNCTION</scope>
</reference>
<reference key="11">
    <citation type="journal article" date="2004" name="Mol. Biol. Cell">
        <title>An Lsm2-Lsm7 complex in Saccharomyces cerevisiae associates with the small nucleolar RNA snR5.</title>
        <authorList>
            <person name="Fernandez C.F."/>
            <person name="Pannone B.K."/>
            <person name="Chen X."/>
            <person name="Fuchs G."/>
            <person name="Wolin S.L."/>
        </authorList>
    </citation>
    <scope>FUNCTION</scope>
    <scope>IDENTIFICATION IN THE LSM2-LSM7 COMPLEX</scope>
    <scope>SUBCELLULAR LOCATION</scope>
</reference>
<reference key="12">
    <citation type="journal article" date="2004" name="Mol. Cell. Biol.">
        <title>Nuclear pre-mRNA decapping and 5' degradation in yeast require the Lsm2-8p complex.</title>
        <authorList>
            <person name="Kufel J."/>
            <person name="Bousquet-Antonelli C."/>
            <person name="Beggs J.D."/>
            <person name="Tollervey D."/>
        </authorList>
    </citation>
    <scope>FUNCTION OF THE LSM2-LSM8 COMPLEX IN NUCLEAR MRNA DEGRADATION</scope>
</reference>
<reference key="13">
    <citation type="journal article" date="2005" name="Nucleic Acids Res.">
        <title>Mapping of transcription start sites in Saccharomyces cerevisiae using 5' SAGE.</title>
        <authorList>
            <person name="Zhang Z."/>
            <person name="Dietrich F.S."/>
        </authorList>
    </citation>
    <scope>IDENTIFICATION OF PROBABLE INITIATION SITE</scope>
</reference>
<reference key="14">
    <citation type="journal article" date="2007" name="J. Cell Sci.">
        <title>Requirements for nuclear localization of the Lsm2-8p complex and competition between nuclear and cytoplasmic Lsm complexes.</title>
        <authorList>
            <person name="Spiller M.P."/>
            <person name="Reijns M.A.M."/>
            <person name="Beggs J.D."/>
        </authorList>
    </citation>
    <scope>SUBCELLULAR LOCATION</scope>
</reference>
<reference key="15">
    <citation type="journal article" date="2007" name="RNA">
        <title>The decapping activator Lsm1p-7p-Pat1p complex has the intrinsic ability to distinguish between oligoadenylated and polyadenylated RNAs.</title>
        <authorList>
            <person name="Chowdhury A."/>
            <person name="Mukhopadhyay J."/>
            <person name="Tharun S."/>
        </authorList>
    </citation>
    <scope>FUNCTION OF THE LSM1-LSM7-PAT1 COMPLEX</scope>
</reference>
<reference key="16">
    <citation type="journal article" date="2018" name="PLoS Genet.">
        <title>The Lsm1-7/Pat1 complex binds to stress-activated mRNAs and modulates the response to hyperosmotic shock.</title>
        <authorList>
            <person name="Garre E."/>
            <person name="Pelechano V."/>
            <person name="Sanchez Del Pino M."/>
            <person name="Alepuz P."/>
            <person name="Sunnerhagen P."/>
        </authorList>
    </citation>
    <scope>FUNCTION</scope>
</reference>
<reference key="17">
    <citation type="journal article" date="2013" name="Cell Rep.">
        <title>Architecture of the Lsm1-7-Pat1 complex: a conserved assembly in eukaryotic mRNA turnover.</title>
        <authorList>
            <person name="Sharif H."/>
            <person name="Conti E."/>
        </authorList>
    </citation>
    <scope>X-RAY CRYSTALLOGRAPHY (2.30 ANGSTROMS) OF LSM1-LSM7 COMPLEX</scope>
    <scope>SUBUNIT</scope>
    <scope>INTERACTION WITH PAT1</scope>
</reference>
<reference key="18">
    <citation type="journal article" date="2014" name="Cell Res.">
        <title>Crystal structure and biochemical analysis of the heptameric Lsm1-7 complex.</title>
        <authorList>
            <person name="Zhou L."/>
            <person name="Zhou Y."/>
            <person name="Hang J."/>
            <person name="Wan R."/>
            <person name="Lu G."/>
            <person name="Yan C."/>
            <person name="Shi Y."/>
        </authorList>
    </citation>
    <scope>X-RAY CRYSTALLOGRAPHY (2.95 ANGSTROMS) OF LSM1-LSM7 COMPLEX</scope>
    <scope>SUBUNIT</scope>
    <scope>FUNCTION</scope>
    <scope>RNA-BINDING</scope>
    <scope>MUTAGENESIS OF ARG-74</scope>
</reference>
<reference key="19">
    <citation type="journal article" date="2014" name="Nature">
        <title>Crystal structures of the Lsm complex bound to the 3' end sequence of U6 small nuclear RNA.</title>
        <authorList>
            <person name="Zhou L."/>
            <person name="Hang J."/>
            <person name="Zhou Y."/>
            <person name="Wan R."/>
            <person name="Lu G."/>
            <person name="Yin P."/>
            <person name="Yan C."/>
            <person name="Shi Y."/>
        </authorList>
    </citation>
    <scope>X-RAY CRYSTALLOGRAPHY (2.60 ANGSTROMS) OF LSM2-LSM8 COMPLEX</scope>
    <scope>SUBUNIT</scope>
    <scope>FUNCTION</scope>
    <scope>RNA-BINDING</scope>
    <scope>MUTAGENESIS OF ARG-74</scope>
</reference>
<reference evidence="19 20" key="20">
    <citation type="journal article" date="2018" name="Nat. Commun.">
        <title>Architecture of the U6 snRNP reveals specific recognition of 3'-end processed U6 snRNA.</title>
        <authorList>
            <person name="Montemayor E.J."/>
            <person name="Didychuk A.L."/>
            <person name="Yake A.D."/>
            <person name="Sidhu G.K."/>
            <person name="Brow D.A."/>
            <person name="Butcher S.E."/>
        </authorList>
    </citation>
    <scope>X-RAY CRYSTALLOGRAPHY (3.10 ANGSTROMS) IN COMPLEX WITH SNR6; LSM2; LSM3; LSM4; LSM5; PRP24; LSM7 AND LSM8</scope>
    <scope>FUNCTION</scope>
    <scope>IDENTIFICATION IN THE U4/U6 SNRNP ASSEMBLY</scope>
</reference>
<evidence type="ECO:0000255" key="1">
    <source>
        <dbReference type="PROSITE-ProRule" id="PRU01346"/>
    </source>
</evidence>
<evidence type="ECO:0000269" key="2">
    <source>
    </source>
</evidence>
<evidence type="ECO:0000269" key="3">
    <source>
    </source>
</evidence>
<evidence type="ECO:0000269" key="4">
    <source>
    </source>
</evidence>
<evidence type="ECO:0000269" key="5">
    <source>
    </source>
</evidence>
<evidence type="ECO:0000269" key="6">
    <source>
    </source>
</evidence>
<evidence type="ECO:0000269" key="7">
    <source>
    </source>
</evidence>
<evidence type="ECO:0000269" key="8">
    <source>
    </source>
</evidence>
<evidence type="ECO:0000269" key="9">
    <source>
    </source>
</evidence>
<evidence type="ECO:0000269" key="10">
    <source>
    </source>
</evidence>
<evidence type="ECO:0000269" key="11">
    <source>
    </source>
</evidence>
<evidence type="ECO:0000269" key="12">
    <source>
    </source>
</evidence>
<evidence type="ECO:0000269" key="13">
    <source>
    </source>
</evidence>
<evidence type="ECO:0000269" key="14">
    <source>
    </source>
</evidence>
<evidence type="ECO:0000269" key="15">
    <source>
    </source>
</evidence>
<evidence type="ECO:0000269" key="16">
    <source>
    </source>
</evidence>
<evidence type="ECO:0000305" key="17"/>
<evidence type="ECO:0000305" key="18">
    <source>
    </source>
</evidence>
<evidence type="ECO:0007744" key="19">
    <source>
        <dbReference type="PDB" id="5VSU"/>
    </source>
</evidence>
<evidence type="ECO:0007744" key="20">
    <source>
        <dbReference type="PDB" id="6ASO"/>
    </source>
</evidence>
<evidence type="ECO:0007829" key="21">
    <source>
        <dbReference type="PDB" id="4C92"/>
    </source>
</evidence>
<evidence type="ECO:0007829" key="22">
    <source>
        <dbReference type="PDB" id="4M75"/>
    </source>
</evidence>
<evidence type="ECO:0007829" key="23">
    <source>
        <dbReference type="PDB" id="4M7A"/>
    </source>
</evidence>
<proteinExistence type="evidence at protein level"/>
<organism>
    <name type="scientific">Saccharomyces cerevisiae (strain ATCC 204508 / S288c)</name>
    <name type="common">Baker's yeast</name>
    <dbReference type="NCBI Taxonomy" id="559292"/>
    <lineage>
        <taxon>Eukaryota</taxon>
        <taxon>Fungi</taxon>
        <taxon>Dikarya</taxon>
        <taxon>Ascomycota</taxon>
        <taxon>Saccharomycotina</taxon>
        <taxon>Saccharomycetes</taxon>
        <taxon>Saccharomycetales</taxon>
        <taxon>Saccharomycetaceae</taxon>
        <taxon>Saccharomyces</taxon>
    </lineage>
</organism>
<feature type="chain" id="PRO_0000125578" description="LSM complex subunit LSM6">
    <location>
        <begin position="1"/>
        <end position="86"/>
    </location>
</feature>
<feature type="domain" description="Sm" evidence="1">
    <location>
        <begin position="11"/>
        <end position="86"/>
    </location>
</feature>
<feature type="mutagenesis site" description="Reduces affinity for poly-U RNA ends." evidence="13 14">
    <original>R</original>
    <variation>A</variation>
    <location>
        <position position="74"/>
    </location>
</feature>
<feature type="helix" evidence="21">
    <location>
        <begin position="11"/>
        <end position="17"/>
    </location>
</feature>
<feature type="turn" evidence="21">
    <location>
        <begin position="18"/>
        <end position="21"/>
    </location>
</feature>
<feature type="strand" evidence="21">
    <location>
        <begin position="22"/>
        <end position="28"/>
    </location>
</feature>
<feature type="strand" evidence="21">
    <location>
        <begin position="31"/>
        <end position="41"/>
    </location>
</feature>
<feature type="strand" evidence="21">
    <location>
        <begin position="47"/>
        <end position="57"/>
    </location>
</feature>
<feature type="turn" evidence="22">
    <location>
        <begin position="59"/>
        <end position="61"/>
    </location>
</feature>
<feature type="strand" evidence="23">
    <location>
        <begin position="65"/>
        <end position="69"/>
    </location>
</feature>
<feature type="strand" evidence="21">
    <location>
        <begin position="71"/>
        <end position="73"/>
    </location>
</feature>
<feature type="helix" evidence="21">
    <location>
        <begin position="75"/>
        <end position="77"/>
    </location>
</feature>
<feature type="strand" evidence="21">
    <location>
        <begin position="78"/>
        <end position="83"/>
    </location>
</feature>
<name>LSM6_YEAST</name>
<gene>
    <name type="primary">LSM6</name>
    <name type="ordered locus">YDR378C</name>
    <name type="ORF">D9481.18</name>
</gene>
<protein>
    <recommendedName>
        <fullName evidence="17">LSM complex subunit LSM6</fullName>
    </recommendedName>
</protein>
<sequence>MSGKASTEGSVTTEFLSDIIGKTVNVKLASGLLYSGRLESIDGFMNVALSSATEHYESNNNKLLNKFNSDVFLRGTQVMYISEQKI</sequence>